<reference key="1">
    <citation type="submission" date="2000-07" db="EMBL/GenBank/DDBJ databases">
        <title>Cloning and analysis of a novel human myelin proteolipid protein-like gene.</title>
        <authorList>
            <person name="Mao Y."/>
            <person name="Xie Y."/>
            <person name="Zhao W."/>
            <person name="Zhou Z."/>
            <person name="Wang W."/>
            <person name="Zhao S."/>
            <person name="Huang Y."/>
        </authorList>
    </citation>
    <scope>NUCLEOTIDE SEQUENCE [MRNA]</scope>
</reference>
<reference key="2">
    <citation type="journal article" date="2004" name="Nat. Genet.">
        <title>Complete sequencing and characterization of 21,243 full-length human cDNAs.</title>
        <authorList>
            <person name="Ota T."/>
            <person name="Suzuki Y."/>
            <person name="Nishikawa T."/>
            <person name="Otsuki T."/>
            <person name="Sugiyama T."/>
            <person name="Irie R."/>
            <person name="Wakamatsu A."/>
            <person name="Hayashi K."/>
            <person name="Sato H."/>
            <person name="Nagai K."/>
            <person name="Kimura K."/>
            <person name="Makita H."/>
            <person name="Sekine M."/>
            <person name="Obayashi M."/>
            <person name="Nishi T."/>
            <person name="Shibahara T."/>
            <person name="Tanaka T."/>
            <person name="Ishii S."/>
            <person name="Yamamoto J."/>
            <person name="Saito K."/>
            <person name="Kawai Y."/>
            <person name="Isono Y."/>
            <person name="Nakamura Y."/>
            <person name="Nagahari K."/>
            <person name="Murakami K."/>
            <person name="Yasuda T."/>
            <person name="Iwayanagi T."/>
            <person name="Wagatsuma M."/>
            <person name="Shiratori A."/>
            <person name="Sudo H."/>
            <person name="Hosoiri T."/>
            <person name="Kaku Y."/>
            <person name="Kodaira H."/>
            <person name="Kondo H."/>
            <person name="Sugawara M."/>
            <person name="Takahashi M."/>
            <person name="Kanda K."/>
            <person name="Yokoi T."/>
            <person name="Furuya T."/>
            <person name="Kikkawa E."/>
            <person name="Omura Y."/>
            <person name="Abe K."/>
            <person name="Kamihara K."/>
            <person name="Katsuta N."/>
            <person name="Sato K."/>
            <person name="Tanikawa M."/>
            <person name="Yamazaki M."/>
            <person name="Ninomiya K."/>
            <person name="Ishibashi T."/>
            <person name="Yamashita H."/>
            <person name="Murakawa K."/>
            <person name="Fujimori K."/>
            <person name="Tanai H."/>
            <person name="Kimata M."/>
            <person name="Watanabe M."/>
            <person name="Hiraoka S."/>
            <person name="Chiba Y."/>
            <person name="Ishida S."/>
            <person name="Ono Y."/>
            <person name="Takiguchi S."/>
            <person name="Watanabe S."/>
            <person name="Yosida M."/>
            <person name="Hotuta T."/>
            <person name="Kusano J."/>
            <person name="Kanehori K."/>
            <person name="Takahashi-Fujii A."/>
            <person name="Hara H."/>
            <person name="Tanase T.-O."/>
            <person name="Nomura Y."/>
            <person name="Togiya S."/>
            <person name="Komai F."/>
            <person name="Hara R."/>
            <person name="Takeuchi K."/>
            <person name="Arita M."/>
            <person name="Imose N."/>
            <person name="Musashino K."/>
            <person name="Yuuki H."/>
            <person name="Oshima A."/>
            <person name="Sasaki N."/>
            <person name="Aotsuka S."/>
            <person name="Yoshikawa Y."/>
            <person name="Matsunawa H."/>
            <person name="Ichihara T."/>
            <person name="Shiohata N."/>
            <person name="Sano S."/>
            <person name="Moriya S."/>
            <person name="Momiyama H."/>
            <person name="Satoh N."/>
            <person name="Takami S."/>
            <person name="Terashima Y."/>
            <person name="Suzuki O."/>
            <person name="Nakagawa S."/>
            <person name="Senoh A."/>
            <person name="Mizoguchi H."/>
            <person name="Goto Y."/>
            <person name="Shimizu F."/>
            <person name="Wakebe H."/>
            <person name="Hishigaki H."/>
            <person name="Watanabe T."/>
            <person name="Sugiyama A."/>
            <person name="Takemoto M."/>
            <person name="Kawakami B."/>
            <person name="Yamazaki M."/>
            <person name="Watanabe K."/>
            <person name="Kumagai A."/>
            <person name="Itakura S."/>
            <person name="Fukuzumi Y."/>
            <person name="Fujimori Y."/>
            <person name="Komiyama M."/>
            <person name="Tashiro H."/>
            <person name="Tanigami A."/>
            <person name="Fujiwara T."/>
            <person name="Ono T."/>
            <person name="Yamada K."/>
            <person name="Fujii Y."/>
            <person name="Ozaki K."/>
            <person name="Hirao M."/>
            <person name="Ohmori Y."/>
            <person name="Kawabata A."/>
            <person name="Hikiji T."/>
            <person name="Kobatake N."/>
            <person name="Inagaki H."/>
            <person name="Ikema Y."/>
            <person name="Okamoto S."/>
            <person name="Okitani R."/>
            <person name="Kawakami T."/>
            <person name="Noguchi S."/>
            <person name="Itoh T."/>
            <person name="Shigeta K."/>
            <person name="Senba T."/>
            <person name="Matsumura K."/>
            <person name="Nakajima Y."/>
            <person name="Mizuno T."/>
            <person name="Morinaga M."/>
            <person name="Sasaki M."/>
            <person name="Togashi T."/>
            <person name="Oyama M."/>
            <person name="Hata H."/>
            <person name="Watanabe M."/>
            <person name="Komatsu T."/>
            <person name="Mizushima-Sugano J."/>
            <person name="Satoh T."/>
            <person name="Shirai Y."/>
            <person name="Takahashi Y."/>
            <person name="Nakagawa K."/>
            <person name="Okumura K."/>
            <person name="Nagase T."/>
            <person name="Nomura N."/>
            <person name="Kikuchi H."/>
            <person name="Masuho Y."/>
            <person name="Yamashita R."/>
            <person name="Nakai K."/>
            <person name="Yada T."/>
            <person name="Nakamura Y."/>
            <person name="Ohara O."/>
            <person name="Isogai T."/>
            <person name="Sugano S."/>
        </authorList>
    </citation>
    <scope>NUCLEOTIDE SEQUENCE [LARGE SCALE MRNA]</scope>
    <source>
        <tissue>Brain</tissue>
    </source>
</reference>
<reference key="3">
    <citation type="journal article" date="2003" name="Nature">
        <title>The DNA sequence and analysis of human chromosome 14.</title>
        <authorList>
            <person name="Heilig R."/>
            <person name="Eckenberg R."/>
            <person name="Petit J.-L."/>
            <person name="Fonknechten N."/>
            <person name="Da Silva C."/>
            <person name="Cattolico L."/>
            <person name="Levy M."/>
            <person name="Barbe V."/>
            <person name="De Berardinis V."/>
            <person name="Ureta-Vidal A."/>
            <person name="Pelletier E."/>
            <person name="Vico V."/>
            <person name="Anthouard V."/>
            <person name="Rowen L."/>
            <person name="Madan A."/>
            <person name="Qin S."/>
            <person name="Sun H."/>
            <person name="Du H."/>
            <person name="Pepin K."/>
            <person name="Artiguenave F."/>
            <person name="Robert C."/>
            <person name="Cruaud C."/>
            <person name="Bruels T."/>
            <person name="Jaillon O."/>
            <person name="Friedlander L."/>
            <person name="Samson G."/>
            <person name="Brottier P."/>
            <person name="Cure S."/>
            <person name="Segurens B."/>
            <person name="Aniere F."/>
            <person name="Samain S."/>
            <person name="Crespeau H."/>
            <person name="Abbasi N."/>
            <person name="Aiach N."/>
            <person name="Boscus D."/>
            <person name="Dickhoff R."/>
            <person name="Dors M."/>
            <person name="Dubois I."/>
            <person name="Friedman C."/>
            <person name="Gouyvenoux M."/>
            <person name="James R."/>
            <person name="Madan A."/>
            <person name="Mairey-Estrada B."/>
            <person name="Mangenot S."/>
            <person name="Martins N."/>
            <person name="Menard M."/>
            <person name="Oztas S."/>
            <person name="Ratcliffe A."/>
            <person name="Shaffer T."/>
            <person name="Trask B."/>
            <person name="Vacherie B."/>
            <person name="Bellemere C."/>
            <person name="Belser C."/>
            <person name="Besnard-Gonnet M."/>
            <person name="Bartol-Mavel D."/>
            <person name="Boutard M."/>
            <person name="Briez-Silla S."/>
            <person name="Combette S."/>
            <person name="Dufosse-Laurent V."/>
            <person name="Ferron C."/>
            <person name="Lechaplais C."/>
            <person name="Louesse C."/>
            <person name="Muselet D."/>
            <person name="Magdelenat G."/>
            <person name="Pateau E."/>
            <person name="Petit E."/>
            <person name="Sirvain-Trukniewicz P."/>
            <person name="Trybou A."/>
            <person name="Vega-Czarny N."/>
            <person name="Bataille E."/>
            <person name="Bluet E."/>
            <person name="Bordelais I."/>
            <person name="Dubois M."/>
            <person name="Dumont C."/>
            <person name="Guerin T."/>
            <person name="Haffray S."/>
            <person name="Hammadi R."/>
            <person name="Muanga J."/>
            <person name="Pellouin V."/>
            <person name="Robert D."/>
            <person name="Wunderle E."/>
            <person name="Gauguet G."/>
            <person name="Roy A."/>
            <person name="Sainte-Marthe L."/>
            <person name="Verdier J."/>
            <person name="Verdier-Discala C."/>
            <person name="Hillier L.W."/>
            <person name="Fulton L."/>
            <person name="McPherson J."/>
            <person name="Matsuda F."/>
            <person name="Wilson R."/>
            <person name="Scarpelli C."/>
            <person name="Gyapay G."/>
            <person name="Wincker P."/>
            <person name="Saurin W."/>
            <person name="Quetier F."/>
            <person name="Waterston R."/>
            <person name="Hood L."/>
            <person name="Weissenbach J."/>
        </authorList>
    </citation>
    <scope>NUCLEOTIDE SEQUENCE [LARGE SCALE GENOMIC DNA]</scope>
</reference>
<reference key="4">
    <citation type="journal article" date="2004" name="Genome Res.">
        <title>The status, quality, and expansion of the NIH full-length cDNA project: the Mammalian Gene Collection (MGC).</title>
        <authorList>
            <consortium name="The MGC Project Team"/>
        </authorList>
    </citation>
    <scope>NUCLEOTIDE SEQUENCE [LARGE SCALE MRNA]</scope>
    <source>
        <tissue>Brain</tissue>
    </source>
</reference>
<comment type="sequence caution" evidence="4">
    <conflict type="erroneous gene model prediction">
        <sequence resource="EMBL-CDS" id="AAF86288"/>
    </conflict>
</comment>
<comment type="sequence caution" evidence="4">
    <conflict type="erroneous gene model prediction">
        <sequence resource="EMBL-CDS" id="BAG35108"/>
    </conflict>
</comment>
<proteinExistence type="evidence at protein level"/>
<accession>Q9NQR7</accession>
<accession>B2R5G1</accession>
<accession>Q2M359</accession>
<evidence type="ECO:0000250" key="1">
    <source>
        <dbReference type="UniProtKB" id="Q3UHB8"/>
    </source>
</evidence>
<evidence type="ECO:0000255" key="2"/>
<evidence type="ECO:0000256" key="3">
    <source>
        <dbReference type="SAM" id="MobiDB-lite"/>
    </source>
</evidence>
<evidence type="ECO:0000305" key="4"/>
<keyword id="KW-0175">Coiled coil</keyword>
<keyword id="KW-0597">Phosphoprotein</keyword>
<keyword id="KW-1267">Proteomics identification</keyword>
<keyword id="KW-1185">Reference proteome</keyword>
<feature type="chain" id="PRO_0000089954" description="Coiled-coil domain-containing protein 177">
    <location>
        <begin position="1"/>
        <end position="707"/>
    </location>
</feature>
<feature type="region of interest" description="Disordered" evidence="3">
    <location>
        <begin position="1"/>
        <end position="65"/>
    </location>
</feature>
<feature type="region of interest" description="Disordered" evidence="3">
    <location>
        <begin position="183"/>
        <end position="294"/>
    </location>
</feature>
<feature type="region of interest" description="Disordered" evidence="3">
    <location>
        <begin position="372"/>
        <end position="426"/>
    </location>
</feature>
<feature type="region of interest" description="Disordered" evidence="3">
    <location>
        <begin position="454"/>
        <end position="581"/>
    </location>
</feature>
<feature type="region of interest" description="Disordered" evidence="3">
    <location>
        <begin position="597"/>
        <end position="637"/>
    </location>
</feature>
<feature type="region of interest" description="Disordered" evidence="3">
    <location>
        <begin position="652"/>
        <end position="707"/>
    </location>
</feature>
<feature type="coiled-coil region" evidence="2">
    <location>
        <begin position="364"/>
        <end position="605"/>
    </location>
</feature>
<feature type="compositionally biased region" description="Low complexity" evidence="3">
    <location>
        <begin position="38"/>
        <end position="49"/>
    </location>
</feature>
<feature type="compositionally biased region" description="Low complexity" evidence="3">
    <location>
        <begin position="183"/>
        <end position="215"/>
    </location>
</feature>
<feature type="compositionally biased region" description="Low complexity" evidence="3">
    <location>
        <begin position="243"/>
        <end position="258"/>
    </location>
</feature>
<feature type="compositionally biased region" description="Basic and acidic residues" evidence="3">
    <location>
        <begin position="377"/>
        <end position="392"/>
    </location>
</feature>
<feature type="compositionally biased region" description="Basic and acidic residues" evidence="3">
    <location>
        <begin position="399"/>
        <end position="426"/>
    </location>
</feature>
<feature type="compositionally biased region" description="Basic and acidic residues" evidence="3">
    <location>
        <begin position="454"/>
        <end position="484"/>
    </location>
</feature>
<feature type="compositionally biased region" description="Basic and acidic residues" evidence="3">
    <location>
        <begin position="491"/>
        <end position="514"/>
    </location>
</feature>
<feature type="compositionally biased region" description="Basic and acidic residues" evidence="3">
    <location>
        <begin position="543"/>
        <end position="581"/>
    </location>
</feature>
<feature type="compositionally biased region" description="Basic and acidic residues" evidence="3">
    <location>
        <begin position="618"/>
        <end position="637"/>
    </location>
</feature>
<feature type="compositionally biased region" description="Basic and acidic residues" evidence="3">
    <location>
        <begin position="652"/>
        <end position="664"/>
    </location>
</feature>
<feature type="compositionally biased region" description="Low complexity" evidence="3">
    <location>
        <begin position="665"/>
        <end position="675"/>
    </location>
</feature>
<feature type="compositionally biased region" description="Basic and acidic residues" evidence="3">
    <location>
        <begin position="677"/>
        <end position="707"/>
    </location>
</feature>
<feature type="modified residue" description="Phosphoserine" evidence="1">
    <location>
        <position position="311"/>
    </location>
</feature>
<sequence length="707" mass="79739">MVDPVPEEEKAGAEPGDSGGDEAVASVPPDSQGAQEPAASSASASASAAVPRKAEVPCAAAEGGRREQSPLLHLDLFNFDCPEAEGSRYVLTSPRSLEACARCAVKPVELLPRALADLVREAPGRSMRVATGLYEAYEAERRAKLQQCRAERERIMREEKRRLFTPLSPAAAAAAAAAAASAPSAGSSSSCSSASLPASPAPRAARKASPSPSSARTQPPPAGSRTGRKSHSLDSLSRRREGALSSESGASSSSYSGESLRELRWPPRASARNSCPAGSASSTTNAPGRPSALTLVPITGRSFSLGDLSHSPQTAQHVERIVRQVRAERGLRGVPERDRKIAALMLARHQEELLLLEQRAAAHGQWELQRVHAKQRREREEREKQRALEQGRRAWAAQVEERRGRRGREEREAARRRQRQYERSEERRRELAERQGLLRRERAERAAREDRLRKLQQEQNLKQREEGLQEGRERAEQIRRERAQRAARAKQRQEGQLQREKRELSRAERARHEALLQGRTRQQRQEREGLRSSLEASLGRAQENYEHLVEQRTRELRERARREELQGRRAKEAAERKEREHQAHLEALARAGERRLQHATQVAEEAVQQKARRVGQSRLEKERAQRANKEKVERDEDCRRRELLQAIGRKLERSEQLTRERRSALESARSTARASFHVREKVREETNTRSFDRMVREAQLHASLDRK</sequence>
<organism>
    <name type="scientific">Homo sapiens</name>
    <name type="common">Human</name>
    <dbReference type="NCBI Taxonomy" id="9606"/>
    <lineage>
        <taxon>Eukaryota</taxon>
        <taxon>Metazoa</taxon>
        <taxon>Chordata</taxon>
        <taxon>Craniata</taxon>
        <taxon>Vertebrata</taxon>
        <taxon>Euteleostomi</taxon>
        <taxon>Mammalia</taxon>
        <taxon>Eutheria</taxon>
        <taxon>Euarchontoglires</taxon>
        <taxon>Primates</taxon>
        <taxon>Haplorrhini</taxon>
        <taxon>Catarrhini</taxon>
        <taxon>Hominidae</taxon>
        <taxon>Homo</taxon>
    </lineage>
</organism>
<name>CC177_HUMAN</name>
<dbReference type="EMBL" id="AF284217">
    <property type="protein sequence ID" value="AAF86288.1"/>
    <property type="status" value="ALT_SEQ"/>
    <property type="molecule type" value="mRNA"/>
</dbReference>
<dbReference type="EMBL" id="AK312175">
    <property type="protein sequence ID" value="BAG35108.1"/>
    <property type="status" value="ALT_SEQ"/>
    <property type="molecule type" value="mRNA"/>
</dbReference>
<dbReference type="EMBL" id="AL133445">
    <property type="status" value="NOT_ANNOTATED_CDS"/>
    <property type="molecule type" value="Genomic_DNA"/>
</dbReference>
<dbReference type="EMBL" id="BC105025">
    <property type="status" value="NOT_ANNOTATED_CDS"/>
    <property type="molecule type" value="mRNA"/>
</dbReference>
<dbReference type="EMBL" id="BC105027">
    <property type="status" value="NOT_ANNOTATED_CDS"/>
    <property type="molecule type" value="mRNA"/>
</dbReference>
<dbReference type="CCDS" id="CCDS59245.1"/>
<dbReference type="RefSeq" id="NP_001258436.1">
    <property type="nucleotide sequence ID" value="NM_001271507.2"/>
</dbReference>
<dbReference type="SMR" id="Q9NQR7"/>
<dbReference type="BioGRID" id="121261">
    <property type="interactions" value="1"/>
</dbReference>
<dbReference type="FunCoup" id="Q9NQR7">
    <property type="interactions" value="4"/>
</dbReference>
<dbReference type="STRING" id="9606.ENSP00000469474"/>
<dbReference type="iPTMnet" id="Q9NQR7"/>
<dbReference type="PhosphoSitePlus" id="Q9NQR7"/>
<dbReference type="BioMuta" id="CCDC177"/>
<dbReference type="DMDM" id="425906070"/>
<dbReference type="MassIVE" id="Q9NQR7"/>
<dbReference type="PaxDb" id="9606-ENSP00000469474"/>
<dbReference type="PeptideAtlas" id="Q9NQR7"/>
<dbReference type="DNASU" id="56936"/>
<dbReference type="Ensembl" id="ENST00000599174.3">
    <property type="protein sequence ID" value="ENSP00000469474.1"/>
    <property type="gene ID" value="ENSG00000267909.3"/>
</dbReference>
<dbReference type="GeneID" id="56936"/>
<dbReference type="KEGG" id="hsa:56936"/>
<dbReference type="MANE-Select" id="ENST00000599174.3">
    <property type="protein sequence ID" value="ENSP00000469474.1"/>
    <property type="RefSeq nucleotide sequence ID" value="NM_001271507.2"/>
    <property type="RefSeq protein sequence ID" value="NP_001258436.1"/>
</dbReference>
<dbReference type="UCSC" id="uc010aqy.5">
    <property type="organism name" value="human"/>
</dbReference>
<dbReference type="AGR" id="HGNC:23243"/>
<dbReference type="CTD" id="56936"/>
<dbReference type="DisGeNET" id="56936"/>
<dbReference type="GeneCards" id="CCDC177"/>
<dbReference type="HGNC" id="HGNC:23243">
    <property type="gene designation" value="CCDC177"/>
</dbReference>
<dbReference type="HPA" id="ENSG00000267909">
    <property type="expression patterns" value="Group enriched (brain, retina)"/>
</dbReference>
<dbReference type="neXtProt" id="NX_Q9NQR7"/>
<dbReference type="OpenTargets" id="ENSG00000267909"/>
<dbReference type="VEuPathDB" id="HostDB:ENSG00000267909"/>
<dbReference type="eggNOG" id="ENOG502QVGE">
    <property type="taxonomic scope" value="Eukaryota"/>
</dbReference>
<dbReference type="GeneTree" id="ENSGT00740000115643"/>
<dbReference type="HOGENOM" id="CLU_017921_0_0_1"/>
<dbReference type="InParanoid" id="Q9NQR7"/>
<dbReference type="OMA" id="YNFDCAA"/>
<dbReference type="OrthoDB" id="200110at2759"/>
<dbReference type="PAN-GO" id="Q9NQR7">
    <property type="GO annotations" value="0 GO annotations based on evolutionary models"/>
</dbReference>
<dbReference type="PathwayCommons" id="Q9NQR7"/>
<dbReference type="BioGRID-ORCS" id="56936">
    <property type="hits" value="16 hits in 1071 CRISPR screens"/>
</dbReference>
<dbReference type="GenomeRNAi" id="56936"/>
<dbReference type="Pharos" id="Q9NQR7">
    <property type="development level" value="Tdark"/>
</dbReference>
<dbReference type="PRO" id="PR:Q9NQR7"/>
<dbReference type="Proteomes" id="UP000005640">
    <property type="component" value="Chromosome 14"/>
</dbReference>
<dbReference type="RNAct" id="Q9NQR7">
    <property type="molecule type" value="protein"/>
</dbReference>
<dbReference type="Bgee" id="ENSG00000267909">
    <property type="expression patterns" value="Expressed in secondary oocyte and 42 other cell types or tissues"/>
</dbReference>
<dbReference type="InterPro" id="IPR029090">
    <property type="entry name" value="DUF4659"/>
</dbReference>
<dbReference type="PANTHER" id="PTHR33663">
    <property type="entry name" value="COILED-COIL DOMAIN-CONTAINING PROTEIN 177"/>
    <property type="match status" value="1"/>
</dbReference>
<dbReference type="PANTHER" id="PTHR33663:SF1">
    <property type="entry name" value="COILED-COIL DOMAIN-CONTAINING PROTEIN 177"/>
    <property type="match status" value="1"/>
</dbReference>
<dbReference type="Pfam" id="PF15558">
    <property type="entry name" value="DUF4659"/>
    <property type="match status" value="1"/>
</dbReference>
<gene>
    <name type="primary">CCDC177</name>
    <name type="synonym">C14orf162</name>
    <name type="synonym">PLPL</name>
</gene>
<protein>
    <recommendedName>
        <fullName>Coiled-coil domain-containing protein 177</fullName>
    </recommendedName>
    <alternativeName>
        <fullName>Myelin proteolipid protein-like protein</fullName>
    </alternativeName>
</protein>